<comment type="function">
    <text evidence="10 12 14 18 22 23 24 25 27">Transforming growth factor-beta superfamily receptors signaling occurs through the Smad family of intracellular mediators. SMAD6 is an inhibitory Smad (i-Smad) that negatively regulates signaling downstream of type I transforming growth factor-beta (PubMed:10647776, PubMed:10708948, PubMed:10708949, PubMed:16951688, PubMed:22275001, PubMed:30848080, PubMed:9436979, PubMed:9759503). Acts as a mediator of TGF-beta and BMP anti-inflammatory activities. Suppresses IL1R-TLR signaling through its direct interaction with PEL1, preventing NF-kappa-B activation, nuclear transport and NF-kappa-B-mediated expression of pro-inflammatory genes (PubMed:16951688). Blocks the BMP-SMAD1 signaling pathway by competing with SMAD4 for receptor-activated SMAD1-binding (PubMed:30848080, PubMed:9436979). Binds to regulatory elements in target promoter regions (PubMed:16491121).</text>
</comment>
<comment type="subunit">
    <text evidence="1 6 8 9 10 11 12 13 22">Interacts with NEDD4L (By similarity). Interacts with WWP1 (By similarity). Interacts with STAMBP and PRKX. Interacts with RNF111 and AXIN1. Interacts with TGF-beta type I receptor superfamily members, including ACVR1B, BMPR1B and TGFBR1. In response to BMP2, but not to TGFB treatment, interacts with SMAD1, but not with SMAD2, nor with SMAD4; this interaction may inhibit SMAD1 binding to SMAD4. Interacts with HOXC8 and HOXC9. Interacts with PELI1; this interaction interferes with PELI1 complex formation with TRAF6, IRAK1, IRAK4 and MYD88 in response to IL1B and hence negatively regulates IL1R-TLR signaling. Interacts with TSC22D1/TSC-22 (PubMed:21791611).</text>
</comment>
<comment type="interaction">
    <interactant intactId="EBI-976374">
        <id>O43541</id>
    </interactant>
    <interactant intactId="EBI-4302903">
        <id>P51817</id>
        <label>PRKX</label>
    </interactant>
    <organismsDiffer>false</organismsDiffer>
    <experiments>5</experiments>
</comment>
<comment type="interaction">
    <interactant intactId="EBI-976374">
        <id>O43541</id>
    </interactant>
    <interactant intactId="EBI-976402">
        <id>Q13950</id>
        <label>RUNX2</label>
    </interactant>
    <organismsDiffer>false</organismsDiffer>
    <experiments>3</experiments>
</comment>
<comment type="interaction">
    <interactant intactId="EBI-976374">
        <id>O43541</id>
    </interactant>
    <interactant intactId="EBI-1567153">
        <id>Q15797</id>
        <label>SMAD1</label>
    </interactant>
    <organismsDiffer>false</organismsDiffer>
    <experiments>4</experiments>
</comment>
<comment type="interaction">
    <interactant intactId="EBI-976374">
        <id>O43541</id>
    </interactant>
    <interactant intactId="EBI-976374">
        <id>O43541</id>
        <label>SMAD6</label>
    </interactant>
    <organismsDiffer>false</organismsDiffer>
    <experiments>2</experiments>
</comment>
<comment type="interaction">
    <interactant intactId="EBI-4324970">
        <id>O43541-2</id>
    </interactant>
    <interactant intactId="EBI-396676">
        <id>O95630</id>
        <label>STAMBP</label>
    </interactant>
    <organismsDiffer>false</organismsDiffer>
    <experiments>2</experiments>
</comment>
<comment type="subcellular location">
    <subcellularLocation>
        <location evidence="10">Nucleus</location>
    </subcellularLocation>
</comment>
<comment type="alternative products">
    <event type="alternative splicing"/>
    <isoform>
        <id>O43541-1</id>
        <name>A</name>
        <sequence type="displayed"/>
    </isoform>
    <isoform>
        <id>O43541-2</id>
        <name>B</name>
        <name>Smad 6S</name>
        <sequence type="described" ref="VSP_006179 VSP_006180"/>
    </isoform>
    <isoform>
        <id>O43541-4</id>
        <name>D</name>
        <sequence type="described" ref="VSP_035489 VSP_035490"/>
    </isoform>
</comment>
<comment type="tissue specificity">
    <molecule>Isoform B</molecule>
    <text evidence="7">Expressed in the brain, heart, ovary, peripheral blood leukocytes, small intestine, spleen, thymus, bone marrow, fetal liver and lymph nodes.</text>
</comment>
<comment type="PTM">
    <text evidence="10">Phosphorylated by BMP type 1 receptor kinase and by PRKX.</text>
</comment>
<comment type="PTM">
    <text evidence="2 15">Monoubiquitinated at Lys-173 by the E2/E3 hybrid ubiquitin-protein ligase UBE2O, leading to reduced binding affinity for the activated BMP type I receptor ACVR1/ALK2, thereby enhancing BMP7 and regulating adipocyte differentiation (PubMed:23455153). Ubiquitinated by WWP1 (By similarity). Ubiquitinated by ARK2C, promoting proteasomal degradation, leading to enhance the BMP-Smad signaling (By similarity).</text>
</comment>
<comment type="PTM">
    <text evidence="2">Arginine methylation by PRMT1, which is recruited by BMPR2, initiates BMP-Induced signaling and induces dissociation from the BMPR1B receptor at the cell surface leading to derepress downstream Smad1/Smad5 signaling.</text>
</comment>
<comment type="disease" evidence="14 17 18">
    <disease id="DI-03529">
        <name>Aortic valve disease 2</name>
        <acronym>AOVD2</acronym>
        <description>A common defect in the aortic valve in which two rather than three leaflets are present. It is often associated with aortic valve calcification, stenosis and insufficiency. In extreme cases, the blood flow may be so restricted that the left ventricle fails to grow, resulting in hypoplastic left heart syndrome.</description>
        <dbReference type="MIM" id="614823"/>
    </disease>
    <text evidence="14">The disease is caused by variants affecting the gene represented in this entry. SMAD6 variants may contribute to increased risk of congenital cardiovascular malformations (CVM). CVM is a major cause of mortality and morbidity in childhood. In most sporadic cases that cannot be attributed to particular malformation syndromes or teratogenic exposures, there remains a substantial excess familial risk, indicating a significant genetic contribution to disease susceptibility (PubMed:22275001).</text>
</comment>
<comment type="disease" evidence="16 20">
    <disease id="DI-04994">
        <name>Craniosynostosis 7</name>
        <acronym>CRS7</acronym>
        <description>A form of craniosynostosis, a primary abnormality of skull growth involving premature fusion of one or more cranial sutures. The growth velocity of the skull often cannot match that of the developing brain resulting in an abnormal head shape and, in some cases, increased intracranial pressure, which must be treated promptly to avoid permanent neurodevelopmental disability.</description>
        <dbReference type="MIM" id="617439"/>
    </disease>
    <text evidence="16 20">Disease susceptibility is associated with variants affecting the gene represented in this entry. Rare heterozygous SMAD6 variants have been reported to be strongly associated with non-syndromic midline craniosynostosis, confering a very high risk for disease development in the presence of a common risk allele (rs1884302) near the BMP2 locus (PubMed:27606499). The modifier role of rs1884302 SNP on craniosynostosis development associated with SMAD6 variants has not been confirmed in further studies (PubMed:32499606).</text>
</comment>
<comment type="disease" evidence="19">
    <disease id="DI-05849">
        <name>Radioulnar synostosis, non-syndromic</name>
        <acronym>RUS</acronym>
        <description>An autosomal dominant disease characterized by proximal fusion of the radius and ulna resulting in extremely limited pronation and supination of the forearm. There are two disease forms. Radioulnar synostosis type 1 is characterized by a proximal fusion between the radius and ulna, and the radial head is absent. Radioulnar synostosis type 2 is characterized by a fusion just distal to the proximal radial epiphysis, and congenital dislocation of the radial head. In radioulnar synostosis type 2 there is also a restriction of extension at the elbow.</description>
        <dbReference type="MIM" id="179300"/>
    </disease>
    <text>Disease susceptibility is associated with variants affecting the gene represented in this entry.</text>
</comment>
<comment type="similarity">
    <text evidence="29">Belongs to the dwarfin/SMAD family.</text>
</comment>
<keyword id="KW-0025">Alternative splicing</keyword>
<keyword id="KW-0989">Craniosynostosis</keyword>
<keyword id="KW-0225">Disease variant</keyword>
<keyword id="KW-1017">Isopeptide bond</keyword>
<keyword id="KW-0479">Metal-binding</keyword>
<keyword id="KW-0488">Methylation</keyword>
<keyword id="KW-0539">Nucleus</keyword>
<keyword id="KW-0597">Phosphoprotein</keyword>
<keyword id="KW-1267">Proteomics identification</keyword>
<keyword id="KW-1185">Reference proteome</keyword>
<keyword id="KW-0804">Transcription</keyword>
<keyword id="KW-0805">Transcription regulation</keyword>
<keyword id="KW-0832">Ubl conjugation</keyword>
<keyword id="KW-0862">Zinc</keyword>
<dbReference type="EMBL" id="U59914">
    <property type="protein sequence ID" value="AAC50792.1"/>
    <property type="molecule type" value="mRNA"/>
</dbReference>
<dbReference type="EMBL" id="AF035528">
    <property type="protein sequence ID" value="AAB94137.1"/>
    <property type="molecule type" value="mRNA"/>
</dbReference>
<dbReference type="EMBL" id="AF043640">
    <property type="protein sequence ID" value="AAC00497.1"/>
    <property type="molecule type" value="mRNA"/>
</dbReference>
<dbReference type="EMBL" id="AF037469">
    <property type="protein sequence ID" value="AAC82331.1"/>
    <property type="molecule type" value="mRNA"/>
</dbReference>
<dbReference type="EMBL" id="AF041065">
    <property type="protein sequence ID" value="AAF14343.1"/>
    <property type="molecule type" value="Genomic_DNA"/>
</dbReference>
<dbReference type="EMBL" id="AF041062">
    <property type="protein sequence ID" value="AAF14343.1"/>
    <property type="status" value="JOINED"/>
    <property type="molecule type" value="Genomic_DNA"/>
</dbReference>
<dbReference type="EMBL" id="AF041063">
    <property type="protein sequence ID" value="AAF14343.1"/>
    <property type="status" value="JOINED"/>
    <property type="molecule type" value="Genomic_DNA"/>
</dbReference>
<dbReference type="EMBL" id="AF041064">
    <property type="protein sequence ID" value="AAF14343.1"/>
    <property type="status" value="JOINED"/>
    <property type="molecule type" value="Genomic_DNA"/>
</dbReference>
<dbReference type="EMBL" id="AM909653">
    <property type="protein sequence ID" value="CAP20377.1"/>
    <property type="molecule type" value="mRNA"/>
</dbReference>
<dbReference type="EMBL" id="BC012986">
    <property type="protein sequence ID" value="AAH12986.1"/>
    <property type="molecule type" value="mRNA"/>
</dbReference>
<dbReference type="EMBL" id="AF101474">
    <property type="protein sequence ID" value="AAF06841.1"/>
    <property type="molecule type" value="Genomic_DNA"/>
</dbReference>
<dbReference type="CCDS" id="CCDS10221.1">
    <molecule id="O43541-1"/>
</dbReference>
<dbReference type="RefSeq" id="NP_005576.3">
    <molecule id="O43541-1"/>
    <property type="nucleotide sequence ID" value="NM_005585.4"/>
</dbReference>
<dbReference type="RefSeq" id="XP_011519863.1">
    <molecule id="O43541-2"/>
    <property type="nucleotide sequence ID" value="XM_011521561.3"/>
</dbReference>
<dbReference type="RefSeq" id="XP_054233891.1">
    <molecule id="O43541-2"/>
    <property type="nucleotide sequence ID" value="XM_054377916.1"/>
</dbReference>
<dbReference type="SMR" id="O43541"/>
<dbReference type="BioGRID" id="110266">
    <property type="interactions" value="51"/>
</dbReference>
<dbReference type="CORUM" id="O43541"/>
<dbReference type="DIP" id="DIP-36708N"/>
<dbReference type="FunCoup" id="O43541">
    <property type="interactions" value="1803"/>
</dbReference>
<dbReference type="IntAct" id="O43541">
    <property type="interactions" value="14"/>
</dbReference>
<dbReference type="MINT" id="O43541"/>
<dbReference type="STRING" id="9606.ENSP00000288840"/>
<dbReference type="GlyGen" id="O43541">
    <property type="glycosylation" value="3 sites, 1 O-linked glycan (2 sites)"/>
</dbReference>
<dbReference type="iPTMnet" id="O43541"/>
<dbReference type="PhosphoSitePlus" id="O43541"/>
<dbReference type="BioMuta" id="SMAD6"/>
<dbReference type="jPOST" id="O43541"/>
<dbReference type="MassIVE" id="O43541"/>
<dbReference type="PaxDb" id="9606-ENSP00000288840"/>
<dbReference type="PeptideAtlas" id="O43541"/>
<dbReference type="ProteomicsDB" id="49038">
    <molecule id="O43541-1"/>
</dbReference>
<dbReference type="ProteomicsDB" id="49039">
    <molecule id="O43541-2"/>
</dbReference>
<dbReference type="ProteomicsDB" id="49040">
    <molecule id="O43541-4"/>
</dbReference>
<dbReference type="Antibodypedia" id="13795">
    <property type="antibodies" value="569 antibodies from 37 providers"/>
</dbReference>
<dbReference type="DNASU" id="4091"/>
<dbReference type="Ensembl" id="ENST00000288840.10">
    <molecule id="O43541-1"/>
    <property type="protein sequence ID" value="ENSP00000288840.5"/>
    <property type="gene ID" value="ENSG00000137834.15"/>
</dbReference>
<dbReference type="Ensembl" id="ENST00000557916.5">
    <molecule id="O43541-4"/>
    <property type="protein sequence ID" value="ENSP00000452955.1"/>
    <property type="gene ID" value="ENSG00000137834.15"/>
</dbReference>
<dbReference type="GeneID" id="4091"/>
<dbReference type="KEGG" id="hsa:4091"/>
<dbReference type="MANE-Select" id="ENST00000288840.10">
    <property type="protein sequence ID" value="ENSP00000288840.5"/>
    <property type="RefSeq nucleotide sequence ID" value="NM_005585.5"/>
    <property type="RefSeq protein sequence ID" value="NP_005576.3"/>
</dbReference>
<dbReference type="UCSC" id="uc002aqf.4">
    <molecule id="O43541-1"/>
    <property type="organism name" value="human"/>
</dbReference>
<dbReference type="AGR" id="HGNC:6772"/>
<dbReference type="CTD" id="4091"/>
<dbReference type="DisGeNET" id="4091"/>
<dbReference type="GeneCards" id="SMAD6"/>
<dbReference type="HGNC" id="HGNC:6772">
    <property type="gene designation" value="SMAD6"/>
</dbReference>
<dbReference type="HPA" id="ENSG00000137834">
    <property type="expression patterns" value="Tissue enhanced (heart muscle, lung)"/>
</dbReference>
<dbReference type="MalaCards" id="SMAD6"/>
<dbReference type="MIM" id="179300">
    <property type="type" value="phenotype"/>
</dbReference>
<dbReference type="MIM" id="602931">
    <property type="type" value="gene"/>
</dbReference>
<dbReference type="MIM" id="614823">
    <property type="type" value="phenotype"/>
</dbReference>
<dbReference type="MIM" id="617439">
    <property type="type" value="phenotype"/>
</dbReference>
<dbReference type="neXtProt" id="NX_O43541"/>
<dbReference type="OpenTargets" id="ENSG00000137834"/>
<dbReference type="Orphanet" id="402075">
    <property type="disease" value="Familial bicuspid aortic valve"/>
</dbReference>
<dbReference type="PharmGKB" id="PA30529"/>
<dbReference type="VEuPathDB" id="HostDB:ENSG00000137834"/>
<dbReference type="eggNOG" id="KOG3701">
    <property type="taxonomic scope" value="Eukaryota"/>
</dbReference>
<dbReference type="GeneTree" id="ENSGT00940000158146"/>
<dbReference type="HOGENOM" id="CLU_026736_2_1_1"/>
<dbReference type="InParanoid" id="O43541"/>
<dbReference type="OMA" id="LLVCKVY"/>
<dbReference type="OrthoDB" id="5946219at2759"/>
<dbReference type="PAN-GO" id="O43541">
    <property type="GO annotations" value="9 GO annotations based on evolutionary models"/>
</dbReference>
<dbReference type="PhylomeDB" id="O43541"/>
<dbReference type="TreeFam" id="TF314923"/>
<dbReference type="PathwayCommons" id="O43541"/>
<dbReference type="Reactome" id="R-HSA-201451">
    <property type="pathway name" value="Signaling by BMP"/>
</dbReference>
<dbReference type="Reactome" id="R-HSA-8941326">
    <property type="pathway name" value="RUNX2 regulates bone development"/>
</dbReference>
<dbReference type="SignaLink" id="O43541"/>
<dbReference type="SIGNOR" id="O43541"/>
<dbReference type="BioGRID-ORCS" id="4091">
    <property type="hits" value="28 hits in 1175 CRISPR screens"/>
</dbReference>
<dbReference type="ChiTaRS" id="SMAD6">
    <property type="organism name" value="human"/>
</dbReference>
<dbReference type="GeneWiki" id="Mothers_against_decapentaplegic_homolog_6"/>
<dbReference type="GenomeRNAi" id="4091"/>
<dbReference type="Pharos" id="O43541">
    <property type="development level" value="Tbio"/>
</dbReference>
<dbReference type="PRO" id="PR:O43541"/>
<dbReference type="Proteomes" id="UP000005640">
    <property type="component" value="Chromosome 15"/>
</dbReference>
<dbReference type="RNAct" id="O43541">
    <property type="molecule type" value="protein"/>
</dbReference>
<dbReference type="Bgee" id="ENSG00000137834">
    <property type="expression patterns" value="Expressed in right lung and 201 other cell types or tissues"/>
</dbReference>
<dbReference type="ExpressionAtlas" id="O43541">
    <property type="expression patterns" value="baseline and differential"/>
</dbReference>
<dbReference type="GO" id="GO:0000785">
    <property type="term" value="C:chromatin"/>
    <property type="evidence" value="ECO:0000247"/>
    <property type="project" value="NTNU_SB"/>
</dbReference>
<dbReference type="GO" id="GO:0036064">
    <property type="term" value="C:ciliary basal body"/>
    <property type="evidence" value="ECO:0000314"/>
    <property type="project" value="HPA"/>
</dbReference>
<dbReference type="GO" id="GO:0005929">
    <property type="term" value="C:cilium"/>
    <property type="evidence" value="ECO:0000314"/>
    <property type="project" value="HPA"/>
</dbReference>
<dbReference type="GO" id="GO:0005737">
    <property type="term" value="C:cytoplasm"/>
    <property type="evidence" value="ECO:0000314"/>
    <property type="project" value="UniProt"/>
</dbReference>
<dbReference type="GO" id="GO:0005829">
    <property type="term" value="C:cytosol"/>
    <property type="evidence" value="ECO:0000314"/>
    <property type="project" value="HPA"/>
</dbReference>
<dbReference type="GO" id="GO:0005794">
    <property type="term" value="C:Golgi apparatus"/>
    <property type="evidence" value="ECO:0000314"/>
    <property type="project" value="HPA"/>
</dbReference>
<dbReference type="GO" id="GO:0071144">
    <property type="term" value="C:heteromeric SMAD protein complex"/>
    <property type="evidence" value="ECO:0000318"/>
    <property type="project" value="GO_Central"/>
</dbReference>
<dbReference type="GO" id="GO:0016604">
    <property type="term" value="C:nuclear body"/>
    <property type="evidence" value="ECO:0000314"/>
    <property type="project" value="HPA"/>
</dbReference>
<dbReference type="GO" id="GO:0005654">
    <property type="term" value="C:nucleoplasm"/>
    <property type="evidence" value="ECO:0000314"/>
    <property type="project" value="HPA"/>
</dbReference>
<dbReference type="GO" id="GO:0005634">
    <property type="term" value="C:nucleus"/>
    <property type="evidence" value="ECO:0000314"/>
    <property type="project" value="UniProtKB"/>
</dbReference>
<dbReference type="GO" id="GO:0032991">
    <property type="term" value="C:protein-containing complex"/>
    <property type="evidence" value="ECO:0000314"/>
    <property type="project" value="MGI"/>
</dbReference>
<dbReference type="GO" id="GO:0003682">
    <property type="term" value="F:chromatin binding"/>
    <property type="evidence" value="ECO:0000314"/>
    <property type="project" value="UniProtKB"/>
</dbReference>
<dbReference type="GO" id="GO:0070410">
    <property type="term" value="F:co-SMAD binding"/>
    <property type="evidence" value="ECO:0000353"/>
    <property type="project" value="BHF-UCL"/>
</dbReference>
<dbReference type="GO" id="GO:0070411">
    <property type="term" value="F:I-SMAD binding"/>
    <property type="evidence" value="ECO:0000353"/>
    <property type="project" value="BHF-UCL"/>
</dbReference>
<dbReference type="GO" id="GO:0042802">
    <property type="term" value="F:identical protein binding"/>
    <property type="evidence" value="ECO:0000353"/>
    <property type="project" value="IntAct"/>
</dbReference>
<dbReference type="GO" id="GO:0046872">
    <property type="term" value="F:metal ion binding"/>
    <property type="evidence" value="ECO:0007669"/>
    <property type="project" value="UniProtKB-KW"/>
</dbReference>
<dbReference type="GO" id="GO:0140311">
    <property type="term" value="F:protein sequestering activity"/>
    <property type="evidence" value="ECO:0000314"/>
    <property type="project" value="UniProt"/>
</dbReference>
<dbReference type="GO" id="GO:0070412">
    <property type="term" value="F:R-SMAD binding"/>
    <property type="evidence" value="ECO:0000353"/>
    <property type="project" value="BHF-UCL"/>
</dbReference>
<dbReference type="GO" id="GO:0000976">
    <property type="term" value="F:transcription cis-regulatory region binding"/>
    <property type="evidence" value="ECO:0000314"/>
    <property type="project" value="UniProtKB"/>
</dbReference>
<dbReference type="GO" id="GO:0140416">
    <property type="term" value="F:transcription regulator inhibitor activity"/>
    <property type="evidence" value="ECO:0000314"/>
    <property type="project" value="BHF-UCL"/>
</dbReference>
<dbReference type="GO" id="GO:0070698">
    <property type="term" value="F:type I activin receptor binding"/>
    <property type="evidence" value="ECO:0000314"/>
    <property type="project" value="BHF-UCL"/>
</dbReference>
<dbReference type="GO" id="GO:0034713">
    <property type="term" value="F:type I transforming growth factor beta receptor binding"/>
    <property type="evidence" value="ECO:0000314"/>
    <property type="project" value="BHF-UCL"/>
</dbReference>
<dbReference type="GO" id="GO:0031625">
    <property type="term" value="F:ubiquitin protein ligase binding"/>
    <property type="evidence" value="ECO:0000353"/>
    <property type="project" value="BHF-UCL"/>
</dbReference>
<dbReference type="GO" id="GO:0009653">
    <property type="term" value="P:anatomical structure morphogenesis"/>
    <property type="evidence" value="ECO:0000318"/>
    <property type="project" value="GO_Central"/>
</dbReference>
<dbReference type="GO" id="GO:0035904">
    <property type="term" value="P:aorta development"/>
    <property type="evidence" value="ECO:0007669"/>
    <property type="project" value="Ensembl"/>
</dbReference>
<dbReference type="GO" id="GO:0003180">
    <property type="term" value="P:aortic valve morphogenesis"/>
    <property type="evidence" value="ECO:0000315"/>
    <property type="project" value="BHF-UCL"/>
</dbReference>
<dbReference type="GO" id="GO:0030509">
    <property type="term" value="P:BMP signaling pathway"/>
    <property type="evidence" value="ECO:0000314"/>
    <property type="project" value="UniProtKB"/>
</dbReference>
<dbReference type="GO" id="GO:0030154">
    <property type="term" value="P:cell differentiation"/>
    <property type="evidence" value="ECO:0000318"/>
    <property type="project" value="GO_Central"/>
</dbReference>
<dbReference type="GO" id="GO:0031589">
    <property type="term" value="P:cell-substrate adhesion"/>
    <property type="evidence" value="ECO:0000315"/>
    <property type="project" value="UniProtKB"/>
</dbReference>
<dbReference type="GO" id="GO:0060976">
    <property type="term" value="P:coronary vasculature development"/>
    <property type="evidence" value="ECO:0007669"/>
    <property type="project" value="Ensembl"/>
</dbReference>
<dbReference type="GO" id="GO:0045444">
    <property type="term" value="P:fat cell differentiation"/>
    <property type="evidence" value="ECO:0000314"/>
    <property type="project" value="UniProtKB"/>
</dbReference>
<dbReference type="GO" id="GO:0006955">
    <property type="term" value="P:immune response"/>
    <property type="evidence" value="ECO:0000315"/>
    <property type="project" value="BHF-UCL"/>
</dbReference>
<dbReference type="GO" id="GO:0003183">
    <property type="term" value="P:mitral valve morphogenesis"/>
    <property type="evidence" value="ECO:0000250"/>
    <property type="project" value="BHF-UCL"/>
</dbReference>
<dbReference type="GO" id="GO:0032926">
    <property type="term" value="P:negative regulation of activin receptor signaling pathway"/>
    <property type="evidence" value="ECO:0000314"/>
    <property type="project" value="BHF-UCL"/>
</dbReference>
<dbReference type="GO" id="GO:0043066">
    <property type="term" value="P:negative regulation of apoptotic process"/>
    <property type="evidence" value="ECO:0000315"/>
    <property type="project" value="BHF-UCL"/>
</dbReference>
<dbReference type="GO" id="GO:0030514">
    <property type="term" value="P:negative regulation of BMP signaling pathway"/>
    <property type="evidence" value="ECO:0000314"/>
    <property type="project" value="BHF-UCL"/>
</dbReference>
<dbReference type="GO" id="GO:0008285">
    <property type="term" value="P:negative regulation of cell population proliferation"/>
    <property type="evidence" value="ECO:0000315"/>
    <property type="project" value="BHF-UCL"/>
</dbReference>
<dbReference type="GO" id="GO:0030279">
    <property type="term" value="P:negative regulation of ossification"/>
    <property type="evidence" value="ECO:0000250"/>
    <property type="project" value="BHF-UCL"/>
</dbReference>
<dbReference type="GO" id="GO:0045668">
    <property type="term" value="P:negative regulation of osteoblast differentiation"/>
    <property type="evidence" value="ECO:0000315"/>
    <property type="project" value="BHF-UCL"/>
</dbReference>
<dbReference type="GO" id="GO:0060392">
    <property type="term" value="P:negative regulation of SMAD protein signal transduction"/>
    <property type="evidence" value="ECO:0000314"/>
    <property type="project" value="BHF-UCL"/>
</dbReference>
<dbReference type="GO" id="GO:0030512">
    <property type="term" value="P:negative regulation of transforming growth factor beta receptor signaling pathway"/>
    <property type="evidence" value="ECO:0000314"/>
    <property type="project" value="BHF-UCL"/>
</dbReference>
<dbReference type="GO" id="GO:0003148">
    <property type="term" value="P:outflow tract septum morphogenesis"/>
    <property type="evidence" value="ECO:0000250"/>
    <property type="project" value="BHF-UCL"/>
</dbReference>
<dbReference type="GO" id="GO:1902895">
    <property type="term" value="P:positive regulation of miRNA transcription"/>
    <property type="evidence" value="ECO:0007669"/>
    <property type="project" value="Ensembl"/>
</dbReference>
<dbReference type="GO" id="GO:0003184">
    <property type="term" value="P:pulmonary valve morphogenesis"/>
    <property type="evidence" value="ECO:0000250"/>
    <property type="project" value="BHF-UCL"/>
</dbReference>
<dbReference type="GO" id="GO:0006357">
    <property type="term" value="P:regulation of transcription by RNA polymerase II"/>
    <property type="evidence" value="ECO:0000318"/>
    <property type="project" value="GO_Central"/>
</dbReference>
<dbReference type="GO" id="GO:0043627">
    <property type="term" value="P:response to estrogen"/>
    <property type="evidence" value="ECO:0007669"/>
    <property type="project" value="Ensembl"/>
</dbReference>
<dbReference type="GO" id="GO:0034616">
    <property type="term" value="P:response to laminar fluid shear stress"/>
    <property type="evidence" value="ECO:0000270"/>
    <property type="project" value="BHF-UCL"/>
</dbReference>
<dbReference type="GO" id="GO:0032496">
    <property type="term" value="P:response to lipopolysaccharide"/>
    <property type="evidence" value="ECO:0000314"/>
    <property type="project" value="ARUK-UCL"/>
</dbReference>
<dbReference type="GO" id="GO:0060395">
    <property type="term" value="P:SMAD protein signal transduction"/>
    <property type="evidence" value="ECO:0000318"/>
    <property type="project" value="GO_Central"/>
</dbReference>
<dbReference type="GO" id="GO:0001657">
    <property type="term" value="P:ureteric bud development"/>
    <property type="evidence" value="ECO:0007669"/>
    <property type="project" value="Ensembl"/>
</dbReference>
<dbReference type="GO" id="GO:0003281">
    <property type="term" value="P:ventricular septum development"/>
    <property type="evidence" value="ECO:0007669"/>
    <property type="project" value="Ensembl"/>
</dbReference>
<dbReference type="GO" id="GO:0007352">
    <property type="term" value="P:zygotic specification of dorsal/ventral axis"/>
    <property type="evidence" value="ECO:0000315"/>
    <property type="project" value="BHF-UCL"/>
</dbReference>
<dbReference type="CDD" id="cd10493">
    <property type="entry name" value="MH1_SMAD_6"/>
    <property type="match status" value="1"/>
</dbReference>
<dbReference type="CDD" id="cd10499">
    <property type="entry name" value="MH2_SMAD_6"/>
    <property type="match status" value="1"/>
</dbReference>
<dbReference type="FunFam" id="2.60.200.10:FF:000004">
    <property type="entry name" value="Mothers against decapentaplegic homolog"/>
    <property type="match status" value="1"/>
</dbReference>
<dbReference type="FunFam" id="3.90.520.10:FF:000003">
    <property type="entry name" value="Mothers against decapentaplegic homolog"/>
    <property type="match status" value="1"/>
</dbReference>
<dbReference type="Gene3D" id="2.60.200.10">
    <property type="match status" value="1"/>
</dbReference>
<dbReference type="Gene3D" id="3.90.520.10">
    <property type="entry name" value="SMAD MH1 domain"/>
    <property type="match status" value="1"/>
</dbReference>
<dbReference type="InterPro" id="IPR013790">
    <property type="entry name" value="Dwarfin"/>
</dbReference>
<dbReference type="InterPro" id="IPR003619">
    <property type="entry name" value="MAD_homology1_Dwarfin-type"/>
</dbReference>
<dbReference type="InterPro" id="IPR013019">
    <property type="entry name" value="MAD_homology_MH1"/>
</dbReference>
<dbReference type="InterPro" id="IPR017855">
    <property type="entry name" value="SMAD-like_dom_sf"/>
</dbReference>
<dbReference type="InterPro" id="IPR001132">
    <property type="entry name" value="SMAD_dom_Dwarfin-type"/>
</dbReference>
<dbReference type="InterPro" id="IPR008984">
    <property type="entry name" value="SMAD_FHA_dom_sf"/>
</dbReference>
<dbReference type="InterPro" id="IPR036578">
    <property type="entry name" value="SMAD_MH1_sf"/>
</dbReference>
<dbReference type="PANTHER" id="PTHR13703:SF28">
    <property type="entry name" value="MOTHERS AGAINST DECAPENTAPLEGIC HOMOLOG 6"/>
    <property type="match status" value="1"/>
</dbReference>
<dbReference type="PANTHER" id="PTHR13703">
    <property type="entry name" value="SMAD"/>
    <property type="match status" value="1"/>
</dbReference>
<dbReference type="Pfam" id="PF03165">
    <property type="entry name" value="MH1"/>
    <property type="match status" value="1"/>
</dbReference>
<dbReference type="Pfam" id="PF03166">
    <property type="entry name" value="MH2"/>
    <property type="match status" value="1"/>
</dbReference>
<dbReference type="SMART" id="SM00523">
    <property type="entry name" value="DWA"/>
    <property type="match status" value="1"/>
</dbReference>
<dbReference type="SMART" id="SM00524">
    <property type="entry name" value="DWB"/>
    <property type="match status" value="1"/>
</dbReference>
<dbReference type="SUPFAM" id="SSF56366">
    <property type="entry name" value="SMAD MH1 domain"/>
    <property type="match status" value="1"/>
</dbReference>
<dbReference type="SUPFAM" id="SSF49879">
    <property type="entry name" value="SMAD/FHA domain"/>
    <property type="match status" value="1"/>
</dbReference>
<dbReference type="PROSITE" id="PS51075">
    <property type="entry name" value="MH1"/>
    <property type="match status" value="1"/>
</dbReference>
<dbReference type="PROSITE" id="PS51076">
    <property type="entry name" value="MH2"/>
    <property type="match status" value="1"/>
</dbReference>
<organism>
    <name type="scientific">Homo sapiens</name>
    <name type="common">Human</name>
    <dbReference type="NCBI Taxonomy" id="9606"/>
    <lineage>
        <taxon>Eukaryota</taxon>
        <taxon>Metazoa</taxon>
        <taxon>Chordata</taxon>
        <taxon>Craniata</taxon>
        <taxon>Vertebrata</taxon>
        <taxon>Euteleostomi</taxon>
        <taxon>Mammalia</taxon>
        <taxon>Eutheria</taxon>
        <taxon>Euarchontoglires</taxon>
        <taxon>Primates</taxon>
        <taxon>Haplorrhini</taxon>
        <taxon>Catarrhini</taxon>
        <taxon>Hominidae</taxon>
        <taxon>Homo</taxon>
    </lineage>
</organism>
<reference key="1">
    <citation type="journal article" date="1996" name="Nat. Genet.">
        <title>Mad-related genes in the human.</title>
        <authorList>
            <person name="Riggins G.J."/>
            <person name="Thiagalingam S."/>
            <person name="Rosenblum E."/>
            <person name="Weinstein C.L."/>
            <person name="Kern S.E."/>
            <person name="Hamilton S.R."/>
            <person name="Willson J.K.V."/>
            <person name="Markowitz S.D."/>
            <person name="Kinzler K.W."/>
            <person name="Vogelstein B.V."/>
        </authorList>
    </citation>
    <scope>NUCLEOTIDE SEQUENCE [MRNA] (ISOFORM B)</scope>
</reference>
<reference key="2">
    <citation type="journal article" date="1998" name="Genes Dev.">
        <title>Smad6 inhibits BMP/Smad1 signaling by specifically competing with the Smad4 tumor suppressor.</title>
        <authorList>
            <person name="Hata A."/>
            <person name="Lagna G."/>
            <person name="Massague J."/>
            <person name="Hemmati-Brivanlou A."/>
        </authorList>
    </citation>
    <scope>NUCLEOTIDE SEQUENCE [MRNA] (ISOFORM A)</scope>
    <scope>FUNCTION</scope>
    <scope>INTERACTION WITH ACVR1B; BMPR1B; SMAD1 AND TGFBR1</scope>
    <scope>MUTAGENESIS OF GLY-471 AND 478-ARG--ARG-496</scope>
    <source>
        <tissue>T-cell</tissue>
    </source>
</reference>
<reference key="3">
    <citation type="journal article" date="1998" name="Biochem. Biophys. Res. Commun.">
        <title>Induction of inhibitory Smad6 and Smad7 mRNA by TGF-beta family members.</title>
        <authorList>
            <person name="Afrakhte M."/>
            <person name="Moren A."/>
            <person name="Jossan S."/>
            <person name="Itoh S."/>
            <person name="Sampath K."/>
            <person name="Westermark B."/>
            <person name="Heldin C.H."/>
            <person name="Heldin N.E."/>
            <person name="ten Dijke P."/>
        </authorList>
    </citation>
    <scope>NUCLEOTIDE SEQUENCE [MRNA] (ISOFORM A)</scope>
    <source>
        <tissue>Placenta</tissue>
    </source>
</reference>
<reference key="4">
    <citation type="submission" date="1998-01" db="EMBL/GenBank/DDBJ databases">
        <authorList>
            <person name="Hagiwara K."/>
            <person name="Freeman A.H."/>
            <person name="McMenamin M.G."/>
            <person name="Bennett W.P."/>
            <person name="Nagashima M."/>
            <person name="Minter A.R."/>
            <person name="Yang K."/>
            <person name="Takenoshita S."/>
            <person name="Harris C.C."/>
        </authorList>
    </citation>
    <scope>NUCLEOTIDE SEQUENCE [GENOMIC DNA / MRNA] (ISOFORM A)</scope>
</reference>
<reference key="5">
    <citation type="submission" date="2007-11" db="EMBL/GenBank/DDBJ databases">
        <title>Identification of a new SMAD6 variant in human.</title>
        <authorList>
            <person name="Konrad L."/>
            <person name="Scheiber J.A."/>
            <person name="Brandt H."/>
            <person name="Eickelberg O."/>
            <person name="Hofmann R."/>
        </authorList>
    </citation>
    <scope>NUCLEOTIDE SEQUENCE [MRNA] (ISOFORM D)</scope>
    <source>
        <tissue>Prostatic carcinoma</tissue>
    </source>
</reference>
<reference key="6">
    <citation type="journal article" date="2004" name="Genome Res.">
        <title>The status, quality, and expansion of the NIH full-length cDNA project: the Mammalian Gene Collection (MGC).</title>
        <authorList>
            <consortium name="The MGC Project Team"/>
        </authorList>
    </citation>
    <scope>NUCLEOTIDE SEQUENCE [LARGE SCALE MRNA] (ISOFORM A)</scope>
    <source>
        <tissue>Uterus</tissue>
    </source>
</reference>
<reference key="7">
    <citation type="submission" date="1998-10" db="EMBL/GenBank/DDBJ databases">
        <title>Determination of the genomic structure of human Smad3, Smad6 and Smad7 and the cloning of the human Smad3 promoter.</title>
        <authorList>
            <person name="Hagiwara K."/>
            <person name="Freeman A.A.H."/>
            <person name="McMenamin M.G."/>
            <person name="Bennett W.P."/>
            <person name="Yang K."/>
            <person name="Takenoshita S."/>
            <person name="Harris C.C."/>
        </authorList>
    </citation>
    <scope>PARTIAL NUCLEOTIDE SEQUENCE [GENOMIC DNA] (ISOFORM B)</scope>
</reference>
<reference key="8">
    <citation type="journal article" date="1998" name="Annu. Rev. Biochem.">
        <title>TGF-beta signal transduction.</title>
        <authorList>
            <person name="Massague J."/>
        </authorList>
    </citation>
    <scope>REVIEW</scope>
    <scope>FUNCTION</scope>
</reference>
<reference key="9">
    <citation type="journal article" date="1999" name="Cytokine Growth Factor Rev.">
        <title>Remarkable versatility of Smad proteins in the nucleus of transforming growth factor-beta activated cells.</title>
        <authorList>
            <person name="Verschueren K."/>
            <person name="Huylebroeck D."/>
        </authorList>
    </citation>
    <scope>REVIEW</scope>
    <scope>FUNCTION</scope>
</reference>
<reference key="10">
    <citation type="journal article" date="2000" name="Cytokine Growth Factor Rev.">
        <title>The Smad pathway.</title>
        <authorList>
            <person name="Wrana J.L."/>
            <person name="Attisano L."/>
        </authorList>
    </citation>
    <scope>REVIEW</scope>
    <scope>FUNCTION</scope>
</reference>
<reference key="11">
    <citation type="journal article" date="2000" name="Cytokine Growth Factor Rev.">
        <title>TGF-beta signaling by Smad proteins.</title>
        <authorList>
            <person name="Miyazono K."/>
        </authorList>
    </citation>
    <scope>REVIEW</scope>
    <scope>FUNCTION</scope>
</reference>
<reference key="12">
    <citation type="journal article" date="2000" name="J. Biol. Chem.">
        <title>Smad6 as a transcriptional corepressor.</title>
        <authorList>
            <person name="Bai S."/>
            <person name="Shi X."/>
            <person name="Yang X."/>
            <person name="Cao X."/>
        </authorList>
    </citation>
    <scope>INTERACTION WITH HOXC8</scope>
</reference>
<reference key="13">
    <citation type="journal article" date="2001" name="Dev. Growth Differ.">
        <title>Human truncated Smad 6 (Smad 6s) inhibits the BMP pathway in Xenopus laevis.</title>
        <authorList>
            <person name="Krishnan P."/>
            <person name="King M.W."/>
            <person name="Neff A.W."/>
            <person name="Sandusky G.E."/>
            <person name="Bierman K.L."/>
            <person name="Grinnell B."/>
            <person name="Smith R.C."/>
        </authorList>
    </citation>
    <scope>TISSUE SPECIFICITY (ISOFORM B)</scope>
</reference>
<reference key="14">
    <citation type="journal article" date="2001" name="EMBO J.">
        <title>Promoting bone morphogenetic protein signaling through negative regulation of inhibitory Smads.</title>
        <authorList>
            <person name="Itoh F."/>
            <person name="Asao H."/>
            <person name="Sugamura K."/>
            <person name="Heldin C.-H."/>
            <person name="ten Dijke P."/>
            <person name="Itoh S."/>
        </authorList>
    </citation>
    <scope>INTERACTION WITH STAMBP</scope>
</reference>
<reference key="15">
    <citation type="journal article" date="2003" name="EMBO J.">
        <title>Arkadia amplifies TGF-beta superfamily signaling through degradation of Smad7.</title>
        <authorList>
            <person name="Koinuma D."/>
            <person name="Shinozaki M."/>
            <person name="Komuro A."/>
            <person name="Goto K."/>
            <person name="Saitoh M."/>
            <person name="Hanyu A."/>
            <person name="Ebina M."/>
            <person name="Nukiwa T."/>
            <person name="Miyazawa K."/>
            <person name="Imamura T."/>
            <person name="Miyazono K."/>
        </authorList>
    </citation>
    <scope>INTERACTION WITH RNF111</scope>
</reference>
<reference key="16">
    <citation type="journal article" date="2006" name="EMBO J.">
        <title>Axin is a scaffold protein in TGF-beta signaling that promotes degradation of Smad7 by Arkadia.</title>
        <authorList>
            <person name="Liu W."/>
            <person name="Rui H."/>
            <person name="Wang J."/>
            <person name="Lin S."/>
            <person name="He Y."/>
            <person name="Chen M."/>
            <person name="Li Q."/>
            <person name="Ye Z."/>
            <person name="Zhang S."/>
            <person name="Chan S.C."/>
            <person name="Chen Y.-G."/>
            <person name="Han J."/>
            <person name="Lin S.-C."/>
        </authorList>
    </citation>
    <scope>INTERACTION WITH AXIN1</scope>
</reference>
<reference key="17">
    <citation type="journal article" date="2006" name="Nat. Immunol.">
        <title>Smad6 negatively regulates interleukin 1-receptor-Toll-like receptor signaling through direct interaction with the adapter Pellino-1.</title>
        <authorList>
            <person name="Choi K.C."/>
            <person name="Lee Y.S."/>
            <person name="Lim S."/>
            <person name="Choi H.K."/>
            <person name="Lee C.H."/>
            <person name="Lee E.K."/>
            <person name="Hong S."/>
            <person name="Kim I.H."/>
            <person name="Kim S.J."/>
            <person name="Park S.H."/>
        </authorList>
    </citation>
    <scope>FUNCTION</scope>
    <scope>INTERACTION WITH PELI1</scope>
</reference>
<reference key="18">
    <citation type="journal article" date="2006" name="Oncogene">
        <title>Smad6 is a protein kinase X phosphorylation substrate and is required for HL-60 cell differentiation.</title>
        <authorList>
            <person name="Glesne D."/>
            <person name="Huberman E."/>
        </authorList>
    </citation>
    <scope>FUNCTION</scope>
    <scope>SUBCELLULAR LOCATION</scope>
    <scope>INTERACTION WITH PRKX</scope>
    <scope>MUTAGENESIS OF SER-435</scope>
    <scope>PHOSPHORYLATION AT SER-435</scope>
</reference>
<reference key="19">
    <citation type="journal article" date="2011" name="Mol. Cell. Biol.">
        <title>TSC-22 promotes transforming growth factor beta-mediated cardiac myofibroblast differentiation by antagonizing Smad7 activity.</title>
        <authorList>
            <person name="Yan X."/>
            <person name="Zhang J."/>
            <person name="Pan L."/>
            <person name="Wang P."/>
            <person name="Xue H."/>
            <person name="Zhang L."/>
            <person name="Gao X."/>
            <person name="Zhao X."/>
            <person name="Ning Y."/>
            <person name="Chen Y.G."/>
        </authorList>
    </citation>
    <scope>INTERACTION WITH TSC22D1</scope>
</reference>
<reference key="20">
    <citation type="journal article" date="2012" name="Hum. Mutat.">
        <title>Nonsynonymous variants in the SMAD6 gene predispose to congenital cardiovascular malformation.</title>
        <authorList>
            <person name="Tan H.L."/>
            <person name="Glen E."/>
            <person name="Topf A."/>
            <person name="Hall D."/>
            <person name="O'Sullivan J.J."/>
            <person name="Sneddon L."/>
            <person name="Wren C."/>
            <person name="Avery P."/>
            <person name="Lewis R.J."/>
            <person name="ten Dijke P."/>
            <person name="Arthur H.M."/>
            <person name="Goodship J.A."/>
            <person name="Keavney B.D."/>
        </authorList>
    </citation>
    <scope>INVOLVEMENT IN CONGENITAL CARDIOVASCULAR MALFORMATIONS</scope>
    <scope>INVOLVEMENT IN AOVD2</scope>
    <scope>VARIANT THR-325</scope>
    <scope>VARIANTS AOVD2 LEU-415 AND PHE-484</scope>
    <scope>CHARACTERIZATION OF VARIANTS AOVD2 LEU-415 AND PHE-484</scope>
    <scope>FUNCTION</scope>
</reference>
<reference key="21">
    <citation type="journal article" date="2013" name="EMBO J.">
        <title>Fine-tuning BMP7 signalling in adipogenesis by UBE2O/E2-230K-mediated monoubiquitination of SMAD6.</title>
        <authorList>
            <person name="Zhang X."/>
            <person name="Zhang J."/>
            <person name="Bauer A."/>
            <person name="Zhang L."/>
            <person name="Selinger D.W."/>
            <person name="Lu C.X."/>
            <person name="Ten Dijke P."/>
        </authorList>
    </citation>
    <scope>UBIQUITINATION AT LYS-173</scope>
    <scope>MUTAGENESIS OF LYS-173</scope>
</reference>
<reference key="22">
    <citation type="journal article" date="2016" name="Elife">
        <title>Two locus inheritance of non-syndromic midline craniosynostosis via rare SMAD6 and common BMP2 alleles.</title>
        <authorList>
            <person name="Timberlake A.T."/>
            <person name="Choi J."/>
            <person name="Zaidi S."/>
            <person name="Lu Q."/>
            <person name="Nelson-Williams C."/>
            <person name="Brooks E.D."/>
            <person name="Bilguvar K."/>
            <person name="Tikhonova I."/>
            <person name="Mane S."/>
            <person name="Yang J.F."/>
            <person name="Sawh-Martinez R."/>
            <person name="Persing S."/>
            <person name="Zellner E.G."/>
            <person name="Loring E."/>
            <person name="Chuang C."/>
            <person name="Galm A."/>
            <person name="Hashim P.W."/>
            <person name="Steinbacher D.M."/>
            <person name="DiLuna M.L."/>
            <person name="Duncan C.C."/>
            <person name="Pelphrey K.A."/>
            <person name="Zhao H."/>
            <person name="Persing J.A."/>
            <person name="Lifton R.P."/>
        </authorList>
    </citation>
    <scope>INVOLVEMENT IN CRS7</scope>
    <scope>VARIANTS CRS7 223-GLN--ARG-496 DEL; LYS-287; ALA-306; LEU-323; 374-GLU--ARG-496 DEL; CYS-390; 407-GLU--ARG-496 DEL; CYS-465 AND THR-490</scope>
</reference>
<reference key="23">
    <citation type="journal article" date="2019" name="Genet. Med.">
        <title>SMAD6 is frequently mutated in nonsyndromic radioulnar synostosis.</title>
        <authorList>
            <person name="Yang Y."/>
            <person name="Zheng Y."/>
            <person name="Li W."/>
            <person name="Li L."/>
            <person name="Tu M."/>
            <person name="Zhao L."/>
            <person name="Mei H."/>
            <person name="Zhu G."/>
            <person name="Zhu Y."/>
        </authorList>
    </citation>
    <scope>INVOLVEMENT IN RUS</scope>
    <scope>VARIANTS RUS 115-TRP--ARG-496 DEL; LEU-187; SER-205; ASN-267; 279-TYR--ARG-496 DEL; 315-GLU--ARG-496 DEL; PRO-339; 350-TYR--ARG-496 DEL; ARG-370; 447-GLN--ARG-496 DEL AND ASP-471</scope>
    <scope>VARIANTS 75-ARG--ARG-496 DEL; 130-SER--ARG-496 DEL AND 300-TYR--ARG-496 DEL</scope>
</reference>
<reference key="24">
    <citation type="journal article" date="2019" name="Eur. J. Hum. Genet.">
        <title>Confirmation of the role of pathogenic SMAD6 variants in bicuspid aortic valve-related aortopathy.</title>
        <authorList>
            <person name="Luyckx I."/>
            <person name="MacCarrick G."/>
            <person name="Kempers M."/>
            <person name="Meester J."/>
            <person name="Geryl C."/>
            <person name="Rombouts O."/>
            <person name="Peeters N."/>
            <person name="Claes C."/>
            <person name="Boeckx N."/>
            <person name="Sakalihasan N."/>
            <person name="Jacquinet A."/>
            <person name="Hoischen A."/>
            <person name="Vandeweyer G."/>
            <person name="Van Lent S."/>
            <person name="Saenen J."/>
            <person name="Van Craenenbroeck E."/>
            <person name="Timmermans J."/>
            <person name="Duijnhouwer A."/>
            <person name="Dietz H."/>
            <person name="Van Laer L."/>
            <person name="Loeys B."/>
            <person name="Verstraeten A."/>
        </authorList>
    </citation>
    <scope>VARIANTS AOVD2 14-TRP--ARG-496 DEL; ALA-204; GLY-231; PRO-231 AND GLU-335</scope>
</reference>
<reference key="25">
    <citation type="journal article" date="2019" name="Mol. Genet. Genomic Med.">
        <title>A novel SMAD6 variant in a patient with severely calcified bicuspid aortic valve and thoracic aortic aneurysm.</title>
        <authorList>
            <person name="Park J.E."/>
            <person name="Park J.S."/>
            <person name="Jang S.Y."/>
            <person name="Park S.H."/>
            <person name="Kim J.W."/>
            <person name="Ki C.S."/>
            <person name="Kim D.K."/>
        </authorList>
    </citation>
    <scope>VARIANT AOVD2 GLY-ILE-391 INS</scope>
    <scope>CHARACTERIZATION OF AOVD2 GLY-ILE-391 INS AND PHE-484</scope>
    <scope>FUNCTION</scope>
</reference>
<reference key="26">
    <citation type="journal article" date="2020" name="Genet. Med.">
        <title>SMAD6 variants in craniosynostosis: genotype and phenotype evaluation.</title>
        <authorList>
            <consortium name="Genomics England Research Consortium"/>
            <person name="Calpena E."/>
            <person name="Cuellar A."/>
            <person name="Bala K."/>
            <person name="Swagemakers S.M.A."/>
            <person name="Koelling N."/>
            <person name="McGowan S.J."/>
            <person name="Phipps J.M."/>
            <person name="Balasubramanian M."/>
            <person name="Cunningham M.L."/>
            <person name="Douzgou S."/>
            <person name="Lattanzi W."/>
            <person name="Morton J.E.V."/>
            <person name="Shears D."/>
            <person name="Weber A."/>
            <person name="Wilson L.C."/>
            <person name="Lord H."/>
            <person name="Lester T."/>
            <person name="Johnson D."/>
            <person name="Wall S.A."/>
            <person name="Twigg S.R.F."/>
            <person name="Mathijssen I.M.J."/>
            <person name="Boardman-Pretty F."/>
            <person name="Boyadjiev S.A."/>
            <person name="Wilkie A.O.M."/>
        </authorList>
    </citation>
    <scope>VARIANTS CRS7 ARG-14; ASN-36; 42-ARG--ARG-496 DEL; CYS-85; CYS-88; VAL-98; LEU-113; LYS-171; PRO-224; MET-239; ASN-242; ARG-244; ARG-261; LEU-263; 279-TYR--ARG-496 DEL; THR-325; THR-333; CYS-365; ARG-390; ARG-395; ARG-473 AND LYS-489</scope>
    <scope>CHARACTERIZATION OF VARIANTS CRS7 ARG-14; ASN-36; CYS-85; CYS-88; VAL-98; LEU-113; LYS-171; PRO-224; MET-239; ASN-242; ARG-244; ARG-261; LEU-263; THR-325; THR-333; ARG-390; ARG-395; ARG-473 AND LYS-489</scope>
</reference>
<reference key="27">
    <citation type="journal article" date="2020" name="Genet. Med.">
        <authorList>
            <consortium name="Genomics England Research Consortium"/>
            <person name="Calpena E."/>
            <person name="Cuellar A."/>
            <person name="Bala K."/>
            <person name="Swagemakers S.M.A."/>
            <person name="Koelling N."/>
            <person name="McGowan S.J."/>
            <person name="Phipps J.M."/>
            <person name="Balasubramanian M."/>
            <person name="Cunningham M.L."/>
            <person name="Douzgou S."/>
            <person name="Lattanzi W."/>
            <person name="Morton J.E.V."/>
            <person name="Shears D."/>
            <person name="Weber A."/>
            <person name="Wilson L.C."/>
            <person name="Lord H."/>
            <person name="Lester T."/>
            <person name="Johnson D."/>
            <person name="Wall S.A."/>
            <person name="Twigg S.R.F."/>
            <person name="Mathijssen I.M.J."/>
            <person name="Boardman-Pretty F."/>
            <person name="Boyadjiev S.A."/>
            <person name="Wilkie A.O.M."/>
        </authorList>
    </citation>
    <scope>ERRATUM OF PUBMED:32499606</scope>
</reference>
<reference key="28">
    <citation type="journal article" date="2024" name="J. Med. Genet.">
        <title>Homozygous SMAD6 variants in two unrelated patients with craniosynostosis and radioulnar synostosis.</title>
        <authorList>
            <person name="Luyckx I."/>
            <person name="Walton I.S."/>
            <person name="Boeckx N."/>
            <person name="Van Schil K."/>
            <person name="Pang C."/>
            <person name="De Praeter M."/>
            <person name="Lord H."/>
            <person name="Watson C.M."/>
            <person name="Bonthron D.T."/>
            <person name="Van Laer L."/>
            <person name="Wilkie A.O.M."/>
            <person name="Loeys B."/>
        </authorList>
    </citation>
    <scope>VARIANTS GLY-195 AND LYS-273</scope>
    <scope>CHARACTERIZATION OF VARIANTS GLY-195; LYS-273; THR-325 AND PHE-484</scope>
</reference>
<evidence type="ECO:0000250" key="1"/>
<evidence type="ECO:0000250" key="2">
    <source>
        <dbReference type="UniProtKB" id="O35182"/>
    </source>
</evidence>
<evidence type="ECO:0000255" key="3">
    <source>
        <dbReference type="PROSITE-ProRule" id="PRU00438"/>
    </source>
</evidence>
<evidence type="ECO:0000255" key="4">
    <source>
        <dbReference type="PROSITE-ProRule" id="PRU00439"/>
    </source>
</evidence>
<evidence type="ECO:0000256" key="5">
    <source>
        <dbReference type="SAM" id="MobiDB-lite"/>
    </source>
</evidence>
<evidence type="ECO:0000269" key="6">
    <source>
    </source>
</evidence>
<evidence type="ECO:0000269" key="7">
    <source>
    </source>
</evidence>
<evidence type="ECO:0000269" key="8">
    <source>
    </source>
</evidence>
<evidence type="ECO:0000269" key="9">
    <source>
    </source>
</evidence>
<evidence type="ECO:0000269" key="10">
    <source>
    </source>
</evidence>
<evidence type="ECO:0000269" key="11">
    <source>
    </source>
</evidence>
<evidence type="ECO:0000269" key="12">
    <source>
    </source>
</evidence>
<evidence type="ECO:0000269" key="13">
    <source>
    </source>
</evidence>
<evidence type="ECO:0000269" key="14">
    <source>
    </source>
</evidence>
<evidence type="ECO:0000269" key="15">
    <source>
    </source>
</evidence>
<evidence type="ECO:0000269" key="16">
    <source>
    </source>
</evidence>
<evidence type="ECO:0000269" key="17">
    <source>
    </source>
</evidence>
<evidence type="ECO:0000269" key="18">
    <source>
    </source>
</evidence>
<evidence type="ECO:0000269" key="19">
    <source>
    </source>
</evidence>
<evidence type="ECO:0000269" key="20">
    <source>
    </source>
</evidence>
<evidence type="ECO:0000269" key="21">
    <source>
    </source>
</evidence>
<evidence type="ECO:0000269" key="22">
    <source>
    </source>
</evidence>
<evidence type="ECO:0000303" key="23">
    <source>
    </source>
</evidence>
<evidence type="ECO:0000303" key="24">
    <source>
    </source>
</evidence>
<evidence type="ECO:0000303" key="25">
    <source>
    </source>
</evidence>
<evidence type="ECO:0000303" key="26">
    <source>
    </source>
</evidence>
<evidence type="ECO:0000303" key="27">
    <source>
    </source>
</evidence>
<evidence type="ECO:0000303" key="28">
    <source ref="5"/>
</evidence>
<evidence type="ECO:0000305" key="29"/>
<protein>
    <recommendedName>
        <fullName>Mothers against decapentaplegic homolog 6</fullName>
        <shortName>MAD homolog 6</shortName>
        <shortName>Mothers against DPP homolog 6</shortName>
    </recommendedName>
    <alternativeName>
        <fullName>SMAD family member 6</fullName>
        <shortName>SMAD 6</shortName>
        <shortName>Smad6</shortName>
        <shortName>hSMAD6</shortName>
    </alternativeName>
</protein>
<gene>
    <name type="primary">SMAD6</name>
    <name type="synonym">MADH6</name>
</gene>
<proteinExistence type="evidence at protein level"/>
<name>SMAD6_HUMAN</name>
<accession>O43541</accession>
<accession>A9J6M5</accession>
<accession>O43654</accession>
<accession>Q15799</accession>
<accession>Q7Z7L4</accession>
<accession>Q96E31</accession>
<accession>Q9UKZ3</accession>
<feature type="chain" id="PRO_0000090869" description="Mothers against decapentaplegic homolog 6">
    <location>
        <begin position="1"/>
        <end position="496"/>
    </location>
</feature>
<feature type="domain" description="MH1" evidence="3">
    <location>
        <begin position="148"/>
        <end position="275"/>
    </location>
</feature>
<feature type="domain" description="MH2" evidence="4">
    <location>
        <begin position="331"/>
        <end position="496"/>
    </location>
</feature>
<feature type="region of interest" description="Disordered" evidence="5">
    <location>
        <begin position="1"/>
        <end position="116"/>
    </location>
</feature>
<feature type="region of interest" description="Disordered" evidence="5">
    <location>
        <begin position="136"/>
        <end position="156"/>
    </location>
</feature>
<feature type="compositionally biased region" description="Basic residues" evidence="5">
    <location>
        <begin position="1"/>
        <end position="15"/>
    </location>
</feature>
<feature type="binding site" evidence="1">
    <location>
        <position position="205"/>
    </location>
    <ligand>
        <name>Zn(2+)</name>
        <dbReference type="ChEBI" id="CHEBI:29105"/>
    </ligand>
</feature>
<feature type="binding site" evidence="1">
    <location>
        <position position="247"/>
    </location>
    <ligand>
        <name>Zn(2+)</name>
        <dbReference type="ChEBI" id="CHEBI:29105"/>
    </ligand>
</feature>
<feature type="binding site" evidence="1">
    <location>
        <position position="260"/>
    </location>
    <ligand>
        <name>Zn(2+)</name>
        <dbReference type="ChEBI" id="CHEBI:29105"/>
    </ligand>
</feature>
<feature type="binding site" evidence="1">
    <location>
        <position position="265"/>
    </location>
    <ligand>
        <name>Zn(2+)</name>
        <dbReference type="ChEBI" id="CHEBI:29105"/>
    </ligand>
</feature>
<feature type="modified residue" description="Dimethylated arginine; alternate" evidence="2">
    <location>
        <position position="75"/>
    </location>
</feature>
<feature type="modified residue" description="Omega-N-methylarginine; alternate" evidence="2">
    <location>
        <position position="75"/>
    </location>
</feature>
<feature type="modified residue" description="Dimethylated arginine; alternate" evidence="2">
    <location>
        <position position="82"/>
    </location>
</feature>
<feature type="modified residue" description="Omega-N-methylarginine; alternate" evidence="2">
    <location>
        <position position="82"/>
    </location>
</feature>
<feature type="modified residue" description="Phosphoserine; by PRKX; in vitro" evidence="4 10">
    <location>
        <position position="435"/>
    </location>
</feature>
<feature type="cross-link" description="Glycyl lysine isopeptide (Lys-Gly) (interchain with G-Cter in ubiquitin)" evidence="15">
    <location>
        <position position="173"/>
    </location>
</feature>
<feature type="splice variant" id="VSP_006179" description="In isoform B." evidence="26">
    <location>
        <begin position="1"/>
        <end position="261"/>
    </location>
</feature>
<feature type="splice variant" id="VSP_006180" description="In isoform B." evidence="26">
    <original>NPYHFSRLCGPE</original>
    <variation>MSRMGKPIETQK</variation>
    <location>
        <begin position="262"/>
        <end position="273"/>
    </location>
</feature>
<feature type="splice variant" id="VSP_035489" description="In isoform D." evidence="28">
    <original>DASMSPDATKPSHWCSVAYWE</original>
    <variation>AADAGIGSRGNRGLESSVPCS</variation>
    <location>
        <begin position="318"/>
        <end position="338"/>
    </location>
</feature>
<feature type="splice variant" id="VSP_035490" description="In isoform D." evidence="28">
    <location>
        <begin position="339"/>
        <end position="496"/>
    </location>
</feature>
<feature type="sequence variant" id="VAR_084468" description="In AOVD2." evidence="17">
    <location>
        <begin position="14"/>
        <end position="496"/>
    </location>
</feature>
<feature type="sequence variant" id="VAR_089666" description="In CRS7; uncertain significance; no effect on inhibition of BMP signaling pathway; dbSNP:rs1353173742." evidence="20">
    <original>W</original>
    <variation>R</variation>
    <location>
        <position position="14"/>
    </location>
</feature>
<feature type="sequence variant" id="VAR_089667" description="In CRS7; uncertain significance; no effect on inhibition of BMP signaling pathway; dbSNP:rs773308777." evidence="20">
    <original>D</original>
    <variation>N</variation>
    <location>
        <position position="36"/>
    </location>
</feature>
<feature type="sequence variant" id="VAR_089668" description="Likely risk factor for CRS7." evidence="20">
    <location>
        <begin position="42"/>
        <end position="496"/>
    </location>
</feature>
<feature type="sequence variant" id="VAR_084469" description="Risk factor for radioulnar synostosis and macrocephaly." evidence="19">
    <location>
        <begin position="75"/>
        <end position="496"/>
    </location>
</feature>
<feature type="sequence variant" id="VAR_089669" description="In CRS7; uncertain significance; no effect on inhibition of BMP signaling pathway; dbSNP:rs1056072996." evidence="20">
    <original>R</original>
    <variation>C</variation>
    <location>
        <position position="85"/>
    </location>
</feature>
<feature type="sequence variant" id="VAR_089670" description="In CRS7; uncertain significance; no effect on inhibition of BMP signaling pathway; dbSNP:rs887913905." evidence="20">
    <original>G</original>
    <variation>C</variation>
    <location>
        <position position="88"/>
    </location>
</feature>
<feature type="sequence variant" id="VAR_089671" description="In CRS7; uncertain significance; no effect on inhibition of BMP signaling pathway; dbSNP:rs913087158." evidence="20">
    <original>A</original>
    <variation>V</variation>
    <location>
        <position position="98"/>
    </location>
</feature>
<feature type="sequence variant" id="VAR_089672" description="In CRS7; uncertain significance; no effect on inhibition of BMP signaling pathway; dbSNP:rs1322032924." evidence="20">
    <original>P</original>
    <variation>L</variation>
    <location>
        <position position="113"/>
    </location>
</feature>
<feature type="sequence variant" id="VAR_084470" description="Risk factor for RUS." evidence="19">
    <location>
        <begin position="115"/>
        <end position="496"/>
    </location>
</feature>
<feature type="sequence variant" id="VAR_084471" description="Risk factor for radioulnar synostosis and macrocephaly." evidence="19">
    <location>
        <begin position="130"/>
        <end position="496"/>
    </location>
</feature>
<feature type="sequence variant" id="VAR_089673" description="In CRS7; uncertain significance; no effect on inhibition of BMP signaling pathway; dbSNP:rs1893037722." evidence="20">
    <original>E</original>
    <variation>K</variation>
    <location>
        <position position="171"/>
    </location>
</feature>
<feature type="sequence variant" id="VAR_084472" description="In RUS; uncertain significance; dbSNP:rs1359442505." evidence="19">
    <original>S</original>
    <variation>L</variation>
    <location>
        <position position="187"/>
    </location>
</feature>
<feature type="sequence variant" id="VAR_089674" description="Likely risk factor for autosomal recessive metopic craniosynostosis and radioulnar synostosis; decreased inhibition of BMP signaling pathway; dbSNP:rs868327024." evidence="21">
    <original>V</original>
    <variation>G</variation>
    <location>
        <position position="195"/>
    </location>
</feature>
<feature type="sequence variant" id="VAR_084473" description="In AOVD2; uncertain significance; dbSNP:rs768542939." evidence="17">
    <original>G</original>
    <variation>A</variation>
    <location>
        <position position="204"/>
    </location>
</feature>
<feature type="sequence variant" id="VAR_084474" description="In RUS; uncertain significance; dbSNP:rs1595757271." evidence="19">
    <original>C</original>
    <variation>S</variation>
    <location>
        <position position="205"/>
    </location>
</feature>
<feature type="sequence variant" id="VAR_078924" description="Risk factor for CRS7." evidence="16">
    <location>
        <begin position="223"/>
        <end position="496"/>
    </location>
</feature>
<feature type="sequence variant" id="VAR_089675" description="In CRS7; uncertain significance; no effect on inhibition of BMP signaling pathway." evidence="20">
    <original>L</original>
    <variation>P</variation>
    <location>
        <position position="224"/>
    </location>
</feature>
<feature type="sequence variant" id="VAR_084475" description="In AOVD2; uncertain significance; dbSNP:rs1395007983." evidence="17">
    <original>R</original>
    <variation>G</variation>
    <location>
        <position position="231"/>
    </location>
</feature>
<feature type="sequence variant" id="VAR_084476" description="In AOVD2; uncertain significance; dbSNP:rs1419095990." evidence="17">
    <original>R</original>
    <variation>P</variation>
    <location>
        <position position="231"/>
    </location>
</feature>
<feature type="sequence variant" id="VAR_089676" description="In CRS7; uncertain significance; no effect on inhibition of BMP signaling pathway; dbSNP:rs768794005." evidence="20">
    <original>V</original>
    <variation>M</variation>
    <location>
        <position position="239"/>
    </location>
</feature>
<feature type="sequence variant" id="VAR_089677" description="In CRS7; uncertain significance; no effect on inhibition of BMP signaling pathway; dbSNP:rs1193911261." evidence="20">
    <original>K</original>
    <variation>N</variation>
    <location>
        <position position="242"/>
    </location>
</feature>
<feature type="sequence variant" id="VAR_089678" description="In CRS7; uncertain significance; no effect on inhibition of BMP signaling pathway." evidence="20">
    <original>L</original>
    <variation>R</variation>
    <location>
        <position position="244"/>
    </location>
</feature>
<feature type="sequence variant" id="VAR_089679" description="In CRS7; uncertain significance; no effect on inhibition of BMP signaling pathway." evidence="20">
    <original>C</original>
    <variation>R</variation>
    <location>
        <position position="261"/>
    </location>
</feature>
<feature type="sequence variant" id="VAR_089680" description="In CRS7; uncertain significance; no effect on inhibition of BMP signaling pathway; dbSNP:rs765573567." evidence="20">
    <original>P</original>
    <variation>L</variation>
    <location>
        <position position="263"/>
    </location>
</feature>
<feature type="sequence variant" id="VAR_084477" description="In RUS; uncertain significance; dbSNP:rs1396117157." evidence="19">
    <original>S</original>
    <variation>N</variation>
    <location>
        <position position="267"/>
    </location>
</feature>
<feature type="sequence variant" id="VAR_089681" description="Likely risk factor for autosomal recessive metopic craniosynostosis and radioulnar synostosis; the underlying nucleotide substitution results in an abnormally spliced product and a normal transcript encoding for K-273; dbSNP:rs1259557323." evidence="21">
    <original>E</original>
    <variation>K</variation>
    <location>
        <position position="273"/>
    </location>
</feature>
<feature type="sequence variant" id="VAR_084478" description="Likely risk factor for RUS and CRS7." evidence="19 20">
    <location>
        <begin position="279"/>
        <end position="496"/>
    </location>
</feature>
<feature type="sequence variant" id="VAR_078925" description="In CRS7; uncertain significance; dbSNP:rs570279865." evidence="16">
    <original>E</original>
    <variation>K</variation>
    <location>
        <position position="287"/>
    </location>
</feature>
<feature type="sequence variant" id="VAR_084479" description="Risk factor for radioulnar synostosis, pectus carinatum and macrocephaly." evidence="19">
    <location>
        <begin position="300"/>
        <end position="496"/>
    </location>
</feature>
<feature type="sequence variant" id="VAR_077592" description="Risk factor for CRS7; dbSNP:rs2140604770." evidence="16">
    <original>T</original>
    <variation>A</variation>
    <location>
        <position position="306"/>
    </location>
</feature>
<feature type="sequence variant" id="VAR_084480" description="Risk factor for RUS." evidence="19">
    <location>
        <begin position="315"/>
        <end position="496"/>
    </location>
</feature>
<feature type="sequence variant" id="VAR_077593" description="Risk factor for CRS7; dbSNP:rs1374099442." evidence="16">
    <original>P</original>
    <variation>L</variation>
    <location>
        <position position="323"/>
    </location>
</feature>
<feature type="sequence variant" id="VAR_068074" description="In CRS7; found in a patient with congenital mitral valve prolapse; uncertain significance; no effect on inhibition of BMP signaling pathway; dbSNP:rs199822239." evidence="14 20 21">
    <original>A</original>
    <variation>T</variation>
    <location>
        <position position="325"/>
    </location>
</feature>
<feature type="sequence variant" id="VAR_089682" description="In CRS7; uncertain significance; no effect on inhibition of BMP signaling pathway; dbSNP:rs199531653." evidence="20">
    <original>S</original>
    <variation>T</variation>
    <location>
        <position position="333"/>
    </location>
</feature>
<feature type="sequence variant" id="VAR_084481" description="In AOVD2; uncertain significance; dbSNP:rs900988907." evidence="17">
    <original>A</original>
    <variation>E</variation>
    <location>
        <position position="335"/>
    </location>
</feature>
<feature type="sequence variant" id="VAR_084482" description="In RUS; uncertain significance; dbSNP:rs142278375." evidence="19">
    <original>H</original>
    <variation>P</variation>
    <location>
        <position position="339"/>
    </location>
</feature>
<feature type="sequence variant" id="VAR_084483" description="Risk factor for RUS." evidence="19">
    <location>
        <begin position="350"/>
        <end position="496"/>
    </location>
</feature>
<feature type="sequence variant" id="VAR_089683" description="Likely risk factor for CRS7; dbSNP:rs1176080464." evidence="20">
    <original>G</original>
    <variation>C</variation>
    <location>
        <position position="365"/>
    </location>
</feature>
<feature type="sequence variant" id="VAR_084484" description="In RUS; uncertain significance; dbSNP:rs1567115899." evidence="19">
    <original>Q</original>
    <variation>R</variation>
    <location>
        <position position="370"/>
    </location>
</feature>
<feature type="sequence variant" id="VAR_078926" description="Risk factor for CRS7." evidence="16">
    <location>
        <begin position="374"/>
        <end position="496"/>
    </location>
</feature>
<feature type="sequence variant" id="VAR_077594" description="Risk factor for CRS7." evidence="16">
    <original>G</original>
    <variation>C</variation>
    <location>
        <position position="390"/>
    </location>
</feature>
<feature type="sequence variant" id="VAR_089684" description="Likely risk factor for CRS7; decreased inhibition of BMP signaling pathway; dbSNP:rs770554597." evidence="20">
    <original>G</original>
    <variation>R</variation>
    <location>
        <position position="390"/>
    </location>
</feature>
<feature type="sequence variant" id="VAR_084485" description="In AOVD2; decreased inhibition of BMP signaling pathway." evidence="18">
    <original>I</original>
    <variation>IGI</variation>
    <location>
        <position position="391"/>
    </location>
</feature>
<feature type="sequence variant" id="VAR_089685" description="In CRS7; uncertain significance; no effect on inhibition of BMP signaling pathway; dbSNP:rs149949971." evidence="20">
    <original>K</original>
    <variation>R</variation>
    <location>
        <position position="395"/>
    </location>
</feature>
<feature type="sequence variant" id="VAR_078927" description="Risk factor for CRS7." evidence="16">
    <location>
        <begin position="407"/>
        <end position="496"/>
    </location>
</feature>
<feature type="sequence variant" id="VAR_068075" description="In AOVD2; decreased inhibition of BMP signaling pathway; dbSNP:rs387907284." evidence="14">
    <original>P</original>
    <variation>L</variation>
    <location>
        <position position="415"/>
    </location>
</feature>
<feature type="sequence variant" id="VAR_084486" description="Risk factor for RUS." evidence="19">
    <location>
        <begin position="447"/>
        <end position="496"/>
    </location>
</feature>
<feature type="sequence variant" id="VAR_077595" description="Risk factor for CRS7; dbSNP:rs761888345." evidence="16">
    <original>R</original>
    <variation>C</variation>
    <location>
        <position position="465"/>
    </location>
</feature>
<feature type="sequence variant" id="VAR_084487" description="In RUS; uncertain significance; dbSNP:rs1595805424." evidence="19">
    <original>G</original>
    <variation>D</variation>
    <location>
        <position position="471"/>
    </location>
</feature>
<feature type="sequence variant" id="VAR_089686" description="Likely risk factor for CRS7; decreased inhibition of BMP signaling pathway; dbSNP:rs2140682417." evidence="20">
    <original>G</original>
    <variation>R</variation>
    <location>
        <position position="473"/>
    </location>
</feature>
<feature type="sequence variant" id="VAR_068076" description="In AOVD2; decreased inhibition of BMP signaling pathway; dbSNP:rs387907283." evidence="14 18 21">
    <original>C</original>
    <variation>F</variation>
    <location>
        <position position="484"/>
    </location>
</feature>
<feature type="sequence variant" id="VAR_089687" description="Likely risk factor for CRS7; decreased inhibition of BMP signaling pathway." evidence="20">
    <original>E</original>
    <variation>K</variation>
    <location>
        <position position="489"/>
    </location>
</feature>
<feature type="sequence variant" id="VAR_078928" description="Risk factor for CRS7; dbSNP:rs1338294058." evidence="16">
    <original>I</original>
    <variation>T</variation>
    <location>
        <position position="490"/>
    </location>
</feature>
<feature type="mutagenesis site" description="Abolishes monoubiquitination by UBE2O." evidence="15">
    <original>K</original>
    <variation>R</variation>
    <location>
        <position position="173"/>
    </location>
</feature>
<feature type="mutagenesis site" description="Loss of in vitro phosphorylation by PRKX." evidence="10">
    <original>S</original>
    <variation>A</variation>
    <location>
        <position position="435"/>
    </location>
</feature>
<feature type="mutagenesis site" description="Loss of SMAD1-binding and of inhibition of BMP-SMAD1 signaling. No effect on interaction with BMPR1B and TGFBR1." evidence="22">
    <original>G</original>
    <variation>S</variation>
    <location>
        <position position="471"/>
    </location>
</feature>
<feature type="mutagenesis site" description="Loss of interaction with BMPR1B, TGFBR1 and SMAD1." evidence="22">
    <location>
        <begin position="478"/>
        <end position="496"/>
    </location>
</feature>
<feature type="sequence conflict" description="In Ref. 2; AAB94137." evidence="29" ref="2">
    <original>D</original>
    <variation>N</variation>
    <location>
        <position position="21"/>
    </location>
</feature>
<sequence length="496" mass="53497">MFRSKRSGLVRRLWRSRVVPDREEGGSGGGGGGDEDGSLGSRAEPAPRAREGGGCGRSEVRPVAPRRPRDAVGQRGAQGAGRRRRAGGPPRPMSEPGAGAGSSLLDVAEPGGPGWLPESDCETVTCCLFSERDAAGAPRDASDPLAGAALEPAGGGRSREARSRLLLLEQELKTVTYSLLKRLKERSLDTLLEAVESRGGVPGGCVLVPRADLRLGGQPAPPQLLLGRLFRWPDLQHAVELKPLCGCHSFAAAADGPTVCCNPYHFSRLCGPESPPPPYSRLSPRDEYKPLDLSDSTLSYTETEATNSLITAPGEFSDASMSPDATKPSHWCSVAYWEHRTRVGRLYAVYDQAVSIFYDLPQGSGFCLGQLNLEQRSESVRRTRSKIGFGILLSKEPDGVWAYNRGEHPIFVNSPTLDAPGGRALVVRKVPPGYSIKVFDFERSGLQHAPEPDAADGPYDPNSVRISFAKGWGPCYSRQFITSCPCWLEILLNNPR</sequence>